<keyword id="KW-0488">Methylation</keyword>
<keyword id="KW-1185">Reference proteome</keyword>
<keyword id="KW-0687">Ribonucleoprotein</keyword>
<keyword id="KW-0689">Ribosomal protein</keyword>
<keyword id="KW-0694">RNA-binding</keyword>
<keyword id="KW-0699">rRNA-binding</keyword>
<sequence length="141" mass="14800">MAKKVEKLVKLQIPAGKATPAPPVGPALGQAGINIMGFTKEFNARTADQAGMIIPVVISVYEDKSFTFVTKTPPAAVLLKKAAGVEKGSGTPNKTKVATVTRAQVQEIAETKMPDLNAANVESAMRMIEGTARSMGFTVVD</sequence>
<evidence type="ECO:0000255" key="1">
    <source>
        <dbReference type="HAMAP-Rule" id="MF_00736"/>
    </source>
</evidence>
<evidence type="ECO:0000305" key="2"/>
<accession>Q04LP7</accession>
<reference key="1">
    <citation type="journal article" date="2007" name="J. Bacteriol.">
        <title>Genome sequence of Avery's virulent serotype 2 strain D39 of Streptococcus pneumoniae and comparison with that of unencapsulated laboratory strain R6.</title>
        <authorList>
            <person name="Lanie J.A."/>
            <person name="Ng W.-L."/>
            <person name="Kazmierczak K.M."/>
            <person name="Andrzejewski T.M."/>
            <person name="Davidsen T.M."/>
            <person name="Wayne K.J."/>
            <person name="Tettelin H."/>
            <person name="Glass J.I."/>
            <person name="Winkler M.E."/>
        </authorList>
    </citation>
    <scope>NUCLEOTIDE SEQUENCE [LARGE SCALE GENOMIC DNA]</scope>
    <source>
        <strain>D39 / NCTC 7466</strain>
    </source>
</reference>
<organism>
    <name type="scientific">Streptococcus pneumoniae serotype 2 (strain D39 / NCTC 7466)</name>
    <dbReference type="NCBI Taxonomy" id="373153"/>
    <lineage>
        <taxon>Bacteria</taxon>
        <taxon>Bacillati</taxon>
        <taxon>Bacillota</taxon>
        <taxon>Bacilli</taxon>
        <taxon>Lactobacillales</taxon>
        <taxon>Streptococcaceae</taxon>
        <taxon>Streptococcus</taxon>
    </lineage>
</organism>
<feature type="chain" id="PRO_1000046274" description="Large ribosomal subunit protein uL11">
    <location>
        <begin position="1"/>
        <end position="141"/>
    </location>
</feature>
<gene>
    <name evidence="1" type="primary">rplK</name>
    <name type="ordered locus">SPD_0550</name>
</gene>
<proteinExistence type="inferred from homology"/>
<dbReference type="EMBL" id="CP000410">
    <property type="protein sequence ID" value="ABJ54012.1"/>
    <property type="molecule type" value="Genomic_DNA"/>
</dbReference>
<dbReference type="RefSeq" id="WP_001085809.1">
    <property type="nucleotide sequence ID" value="NZ_JAMLJR010000001.1"/>
</dbReference>
<dbReference type="SMR" id="Q04LP7"/>
<dbReference type="PaxDb" id="373153-SPD_0550"/>
<dbReference type="GeneID" id="93739230"/>
<dbReference type="KEGG" id="spd:SPD_0550"/>
<dbReference type="eggNOG" id="COG0080">
    <property type="taxonomic scope" value="Bacteria"/>
</dbReference>
<dbReference type="HOGENOM" id="CLU_074237_2_1_9"/>
<dbReference type="BioCyc" id="SPNE373153:G1G6V-606-MONOMER"/>
<dbReference type="Proteomes" id="UP000001452">
    <property type="component" value="Chromosome"/>
</dbReference>
<dbReference type="GO" id="GO:0022625">
    <property type="term" value="C:cytosolic large ribosomal subunit"/>
    <property type="evidence" value="ECO:0007669"/>
    <property type="project" value="TreeGrafter"/>
</dbReference>
<dbReference type="GO" id="GO:0070180">
    <property type="term" value="F:large ribosomal subunit rRNA binding"/>
    <property type="evidence" value="ECO:0007669"/>
    <property type="project" value="UniProtKB-UniRule"/>
</dbReference>
<dbReference type="GO" id="GO:0003735">
    <property type="term" value="F:structural constituent of ribosome"/>
    <property type="evidence" value="ECO:0007669"/>
    <property type="project" value="InterPro"/>
</dbReference>
<dbReference type="GO" id="GO:0006412">
    <property type="term" value="P:translation"/>
    <property type="evidence" value="ECO:0007669"/>
    <property type="project" value="UniProtKB-UniRule"/>
</dbReference>
<dbReference type="CDD" id="cd00349">
    <property type="entry name" value="Ribosomal_L11"/>
    <property type="match status" value="1"/>
</dbReference>
<dbReference type="FunFam" id="1.10.10.250:FF:000001">
    <property type="entry name" value="50S ribosomal protein L11"/>
    <property type="match status" value="1"/>
</dbReference>
<dbReference type="FunFam" id="3.30.1550.10:FF:000001">
    <property type="entry name" value="50S ribosomal protein L11"/>
    <property type="match status" value="1"/>
</dbReference>
<dbReference type="Gene3D" id="1.10.10.250">
    <property type="entry name" value="Ribosomal protein L11, C-terminal domain"/>
    <property type="match status" value="1"/>
</dbReference>
<dbReference type="Gene3D" id="3.30.1550.10">
    <property type="entry name" value="Ribosomal protein L11/L12, N-terminal domain"/>
    <property type="match status" value="1"/>
</dbReference>
<dbReference type="HAMAP" id="MF_00736">
    <property type="entry name" value="Ribosomal_uL11"/>
    <property type="match status" value="1"/>
</dbReference>
<dbReference type="InterPro" id="IPR000911">
    <property type="entry name" value="Ribosomal_uL11"/>
</dbReference>
<dbReference type="InterPro" id="IPR006519">
    <property type="entry name" value="Ribosomal_uL11_bac-typ"/>
</dbReference>
<dbReference type="InterPro" id="IPR020783">
    <property type="entry name" value="Ribosomal_uL11_C"/>
</dbReference>
<dbReference type="InterPro" id="IPR036769">
    <property type="entry name" value="Ribosomal_uL11_C_sf"/>
</dbReference>
<dbReference type="InterPro" id="IPR020785">
    <property type="entry name" value="Ribosomal_uL11_CS"/>
</dbReference>
<dbReference type="InterPro" id="IPR020784">
    <property type="entry name" value="Ribosomal_uL11_N"/>
</dbReference>
<dbReference type="InterPro" id="IPR036796">
    <property type="entry name" value="Ribosomal_uL11_N_sf"/>
</dbReference>
<dbReference type="NCBIfam" id="TIGR01632">
    <property type="entry name" value="L11_bact"/>
    <property type="match status" value="1"/>
</dbReference>
<dbReference type="PANTHER" id="PTHR11661">
    <property type="entry name" value="60S RIBOSOMAL PROTEIN L12"/>
    <property type="match status" value="1"/>
</dbReference>
<dbReference type="PANTHER" id="PTHR11661:SF1">
    <property type="entry name" value="LARGE RIBOSOMAL SUBUNIT PROTEIN UL11M"/>
    <property type="match status" value="1"/>
</dbReference>
<dbReference type="Pfam" id="PF00298">
    <property type="entry name" value="Ribosomal_L11"/>
    <property type="match status" value="1"/>
</dbReference>
<dbReference type="Pfam" id="PF03946">
    <property type="entry name" value="Ribosomal_L11_N"/>
    <property type="match status" value="1"/>
</dbReference>
<dbReference type="SMART" id="SM00649">
    <property type="entry name" value="RL11"/>
    <property type="match status" value="1"/>
</dbReference>
<dbReference type="SUPFAM" id="SSF54747">
    <property type="entry name" value="Ribosomal L11/L12e N-terminal domain"/>
    <property type="match status" value="1"/>
</dbReference>
<dbReference type="SUPFAM" id="SSF46906">
    <property type="entry name" value="Ribosomal protein L11, C-terminal domain"/>
    <property type="match status" value="1"/>
</dbReference>
<dbReference type="PROSITE" id="PS00359">
    <property type="entry name" value="RIBOSOMAL_L11"/>
    <property type="match status" value="1"/>
</dbReference>
<name>RL11_STRP2</name>
<protein>
    <recommendedName>
        <fullName evidence="1">Large ribosomal subunit protein uL11</fullName>
    </recommendedName>
    <alternativeName>
        <fullName evidence="2">50S ribosomal protein L11</fullName>
    </alternativeName>
</protein>
<comment type="function">
    <text evidence="1">Forms part of the ribosomal stalk which helps the ribosome interact with GTP-bound translation factors.</text>
</comment>
<comment type="subunit">
    <text evidence="1">Part of the ribosomal stalk of the 50S ribosomal subunit. Interacts with L10 and the large rRNA to form the base of the stalk. L10 forms an elongated spine to which L12 dimers bind in a sequential fashion forming a multimeric L10(L12)X complex.</text>
</comment>
<comment type="PTM">
    <text evidence="1">One or more lysine residues are methylated.</text>
</comment>
<comment type="similarity">
    <text evidence="1">Belongs to the universal ribosomal protein uL11 family.</text>
</comment>